<organism>
    <name type="scientific">Homo sapiens</name>
    <name type="common">Human</name>
    <dbReference type="NCBI Taxonomy" id="9606"/>
    <lineage>
        <taxon>Eukaryota</taxon>
        <taxon>Metazoa</taxon>
        <taxon>Chordata</taxon>
        <taxon>Craniata</taxon>
        <taxon>Vertebrata</taxon>
        <taxon>Euteleostomi</taxon>
        <taxon>Mammalia</taxon>
        <taxon>Eutheria</taxon>
        <taxon>Euarchontoglires</taxon>
        <taxon>Primates</taxon>
        <taxon>Haplorrhini</taxon>
        <taxon>Catarrhini</taxon>
        <taxon>Hominidae</taxon>
        <taxon>Homo</taxon>
    </lineage>
</organism>
<sequence length="327" mass="35136">MTMESGAENQQSGDAAVTEAENQQMTVQAQPQIATLAQVSMPAAHATSSAPTVTLVQLPNGQTVQVHGVIQAAQPSVIQSPQVQTVQISTIAESEDSQESVDSVTDSQKRREILSRRPSYRKILNDLSSDAPGVPRIEEEKSEEETSAPAITTVTVPTPIYQTSSGQYIAITQGGAIQLANNGTDGVQGLQTLTMTNAAATQPGTTILQYAQTTDGQQILVPSNQVVVQAASGDVQTYQIRTAPTSTIAPGVVMASSPALPTQPAEEAARKREVRLMKNREAARECRRKKKEYVKCLENRVAVLENQNKTLIEELKALKDLYCHKSD</sequence>
<protein>
    <recommendedName>
        <fullName>Cyclic AMP-responsive element-binding protein 1</fullName>
        <shortName>CREB-1</shortName>
        <shortName>cAMP-responsive element-binding protein 1</shortName>
    </recommendedName>
</protein>
<reference key="1">
    <citation type="journal article" date="1990" name="Proc. Natl. Acad. Sci. U.S.A.">
        <title>Two distinct forms of active transcription factor CREB (cAMP response element binding protein).</title>
        <authorList>
            <person name="Berkowitz L.A."/>
            <person name="Gilman M.Z."/>
        </authorList>
    </citation>
    <scope>NUCLEOTIDE SEQUENCE [MRNA] (ISOFORM 2)</scope>
</reference>
<reference key="2">
    <citation type="journal article" date="1990" name="EMBO J.">
        <title>Multiple cDNA clones encoding nuclear proteins that bind to the tax-dependent enhancer of HTLV-1: all contain a leucine zipper structure and basic amino acid domain.</title>
        <authorList>
            <person name="Yoshimura T."/>
            <person name="Fujisawa J."/>
            <person name="Yoshida M."/>
        </authorList>
    </citation>
    <scope>NUCLEOTIDE SEQUENCE [MRNA] (ISOFORM 2)</scope>
</reference>
<reference key="3">
    <citation type="journal article" date="1990" name="Trans. Assoc. Am. Physicians">
        <title>Diversification of cyclic AMP-responsive enhancer binding proteins-generated by alternative exon splicing.</title>
        <authorList>
            <person name="Waeber G."/>
            <person name="Meyer T.E."/>
            <person name="Hoeffler J.P."/>
            <person name="Habener J.F."/>
        </authorList>
    </citation>
    <scope>NUCLEOTIDE SEQUENCE [MRNA] (ISOFORM 2)</scope>
</reference>
<reference key="4">
    <citation type="journal article" date="1988" name="Science">
        <title>Cyclic AMP-responsive DNA-binding protein: structure based on a cloned placental cDNA.</title>
        <authorList>
            <person name="Hoeffler J.P."/>
            <person name="Meyer T.E."/>
            <person name="Yun Y."/>
            <person name="Jameson J.L."/>
            <person name="Habener J.F."/>
        </authorList>
    </citation>
    <scope>NUCLEOTIDE SEQUENCE [MRNA] (ISOFORM 1)</scope>
</reference>
<reference key="5">
    <citation type="journal article" date="1991" name="Nucleic Acids Res.">
        <title>Nucleotide and derived amino-acid sequences of the CRE-binding proteins from rat C6 glioma and HeLa cells.</title>
        <authorList>
            <person name="Short M.L."/>
            <person name="Manohar C.F."/>
            <person name="Furtado M.R."/>
            <person name="Ghadge G.D."/>
            <person name="Wolinsky S.M."/>
            <person name="Thimmapaya B."/>
            <person name="Jungmann R.A."/>
        </authorList>
    </citation>
    <scope>NUCLEOTIDE SEQUENCE [MRNA] (ISOFORM 1)</scope>
</reference>
<reference key="6">
    <citation type="journal article" date="2004" name="Reproduction">
        <title>Cloning and expression of a novel CREB mRNA splice variant in human testis.</title>
        <authorList>
            <person name="Huang X."/>
            <person name="Zhang J."/>
            <person name="Lu L."/>
            <person name="Yin L."/>
            <person name="Xu M."/>
            <person name="Wang Y."/>
            <person name="Zhou Z."/>
            <person name="Sha J."/>
        </authorList>
    </citation>
    <scope>NUCLEOTIDE SEQUENCE [MRNA] (ISOFORM 3)</scope>
    <source>
        <tissue>Testis</tissue>
    </source>
</reference>
<reference key="7">
    <citation type="journal article" date="2004" name="Genome Res.">
        <title>The status, quality, and expansion of the NIH full-length cDNA project: the Mammalian Gene Collection (MGC).</title>
        <authorList>
            <consortium name="The MGC Project Team"/>
        </authorList>
    </citation>
    <scope>NUCLEOTIDE SEQUENCE [LARGE SCALE MRNA] (ISOFORM 2)</scope>
    <source>
        <tissue>Eye</tissue>
    </source>
</reference>
<reference key="8">
    <citation type="journal article" date="1993" name="Endocrinology">
        <title>The promoter of the gene encoding 3',5'-cyclic adenosine monophosphate (cAMP) response element binding protein contains cAMP response elements: evidence for positive autoregulation of gene transcription.</title>
        <authorList>
            <person name="Meyer T.E."/>
            <person name="Waeber G."/>
            <person name="Lin J."/>
            <person name="Beckmann W."/>
            <person name="Habener J.F."/>
        </authorList>
    </citation>
    <scope>NUCLEOTIDE SEQUENCE [GENOMIC DNA] OF 1-8</scope>
</reference>
<reference key="9">
    <citation type="journal article" date="1991" name="Science">
        <title>HBV X protein alters the DNA binding specificity of CREB and ATF-2 by protein-protein interactions.</title>
        <authorList>
            <person name="Maguire H.F."/>
            <person name="Hoeffler J.P."/>
            <person name="Siddiqui A."/>
        </authorList>
    </citation>
    <scope>INTERACTION WITH HBV PROTEIN X (MICROBIAL INFECTION)</scope>
</reference>
<reference key="10">
    <citation type="journal article" date="1992" name="Proc. Natl. Acad. Sci. U.S.A.">
        <title>Human T-cell lymphotropic virus type I (HTLV-I) transcriptional activator, Tax, enhances CREB binding to HTLV-I 21-base-pair repeats by protein-protein interaction.</title>
        <authorList>
            <person name="Zhao L.J."/>
            <person name="Giam C.-Z."/>
        </authorList>
    </citation>
    <scope>INTERACTION WITH HTLV-1 TAX (MICROBIAL INFECTION)</scope>
</reference>
<reference key="11">
    <citation type="journal article" date="1994" name="Mol. Cell. Biol.">
        <title>Calcium/calmodulin-dependent protein kinase types II and IV differentially regulate CREB-dependent gene expression.</title>
        <authorList>
            <person name="Matthews R.P."/>
            <person name="Guthrie C.R."/>
            <person name="Wailes L.M."/>
            <person name="Zhao X."/>
            <person name="Means A.R."/>
            <person name="McKnight G.S."/>
        </authorList>
    </citation>
    <scope>PHOSPHORYLATION AT SER-119</scope>
    <scope>MUTAGENESIS OF SER-119</scope>
</reference>
<reference key="12">
    <citation type="journal article" date="1995" name="J. Biol. Chem.">
        <title>Transcriptional activation of egr-1 by granulocyte-macrophage colony-stimulating factor but not interleukin 3 requires phosphorylation of cAMP response element-binding protein (CREB) on serine 133.</title>
        <authorList>
            <person name="Lee H.-J.J."/>
            <person name="Mignacca R.C."/>
            <person name="Sakamoto K.M."/>
        </authorList>
    </citation>
    <scope>PHOSPHORYLATION AT SER-119</scope>
</reference>
<reference key="13">
    <citation type="journal article" date="1998" name="J. Biol. Chem.">
        <title>CREB is a regulatory target for the protein kinase Akt/PKB.</title>
        <authorList>
            <person name="Du K."/>
            <person name="Montminy M."/>
        </authorList>
    </citation>
    <scope>PHOSPHORYLATION AT SER-119</scope>
</reference>
<reference key="14">
    <citation type="journal article" date="1998" name="Proc. Natl. Acad. Sci. U.S.A.">
        <title>Rsk-2 activity is necessary for epidermal growth factor-induced phosphorylation of CREB protein and transcription of c-fos gene.</title>
        <authorList>
            <person name="De Cesare D."/>
            <person name="Jacquot S."/>
            <person name="Hanauer A."/>
            <person name="Sassone-Corsi P."/>
        </authorList>
    </citation>
    <scope>PHOSPHORYLATION AT SER-119</scope>
</reference>
<reference key="15">
    <citation type="journal article" date="2003" name="Mol. Cell">
        <title>TORCs: transducers of regulated CREB activity.</title>
        <authorList>
            <person name="Conkright M.D."/>
            <person name="Canettieri G."/>
            <person name="Screaton R."/>
            <person name="Guzman E."/>
            <person name="Miraglia L."/>
            <person name="Hogenesch J.B."/>
            <person name="Montminy M."/>
        </authorList>
    </citation>
    <scope>FUNCTION</scope>
    <scope>INTERACTION WITH CRTC1</scope>
</reference>
<reference key="16">
    <citation type="journal article" date="2003" name="Proc. Natl. Acad. Sci. U.S.A.">
        <title>Small ubiquitin-related modifier-1 modification mediates resolution of CREB-dependent responses to hypoxia.</title>
        <authorList>
            <person name="Comerford K.M."/>
            <person name="Leonard M.O."/>
            <person name="Karhausen J."/>
            <person name="Carey R."/>
            <person name="Colgan S.P."/>
            <person name="Taylor C.T."/>
        </authorList>
    </citation>
    <scope>SUMOYLATION AT LYS-271 AND LYS-290</scope>
    <scope>SUBCELLULAR LOCATION</scope>
    <scope>MUTAGENESIS OF LYS-141; LYS-271 AND LYS-290</scope>
</reference>
<reference key="17">
    <citation type="journal article" date="2003" name="Proc. Natl. Acad. Sci. U.S.A.">
        <title>Identification of a family of cAMP response element-binding protein coactivators by genome-scale functional analysis in mammalian cells.</title>
        <authorList>
            <person name="Iourgenko V."/>
            <person name="Zhang W."/>
            <person name="Mickanin C."/>
            <person name="Daly I."/>
            <person name="Jiang C."/>
            <person name="Hexham J.M."/>
            <person name="Orth A.P."/>
            <person name="Miraglia L."/>
            <person name="Meltzer J."/>
            <person name="Garza D."/>
            <person name="Chirn G.-W."/>
            <person name="McWhinnie E."/>
            <person name="Cohen D."/>
            <person name="Skelton J."/>
            <person name="Terry R."/>
            <person name="Yu Y."/>
            <person name="Bodian D."/>
            <person name="Buxton F.P."/>
            <person name="Zhu J."/>
            <person name="Song C."/>
            <person name="Labow M.A."/>
        </authorList>
    </citation>
    <scope>INTERACTION WITH CRTC3</scope>
</reference>
<reference key="18">
    <citation type="journal article" date="2004" name="Cell">
        <title>The CREB coactivator TORC2 functions as a calcium- and cAMP-sensitive coincidence detector.</title>
        <authorList>
            <person name="Screaton R.A."/>
            <person name="Conkright M.D."/>
            <person name="Katoh Y."/>
            <person name="Best J.L."/>
            <person name="Canettieri G."/>
            <person name="Jeffries S."/>
            <person name="Guzman E."/>
            <person name="Niessen S."/>
            <person name="Yates J.R. III"/>
            <person name="Takemori H."/>
            <person name="Okamoto M."/>
            <person name="Montminy M."/>
        </authorList>
    </citation>
    <scope>INTERACTION WITH CRTC2</scope>
</reference>
<reference key="19">
    <citation type="journal article" date="2005" name="Biochem. Biophys. Res. Commun.">
        <title>TSSK5, a novel member of the testis-specific serine/threonine kinase family, phosphorylates CREB at Ser-133, and stimulates the CRE/CREB responsive pathway.</title>
        <authorList>
            <person name="Chen X."/>
            <person name="Lin G."/>
            <person name="Wei Y."/>
            <person name="Hexige S."/>
            <person name="Niu Y."/>
            <person name="Liu L."/>
            <person name="Yang C."/>
            <person name="Yu L."/>
        </authorList>
    </citation>
    <scope>INTERACTION WITH TSSK4</scope>
    <scope>PHOSPHORYLATION AT SER-119</scope>
    <scope>MUTAGENESIS OF SER-119</scope>
</reference>
<reference key="20">
    <citation type="journal article" date="2005" name="Cell">
        <title>A nuclear function of beta-arrestin1 in GPCR signaling: regulation of histone acetylation and gene transcription.</title>
        <authorList>
            <person name="Kang J."/>
            <person name="Shi Y."/>
            <person name="Xiang B."/>
            <person name="Qu B."/>
            <person name="Su W."/>
            <person name="Zhu M."/>
            <person name="Zhang M."/>
            <person name="Bao G."/>
            <person name="Wang F."/>
            <person name="Zhang X."/>
            <person name="Yang R."/>
            <person name="Fan F."/>
            <person name="Chen X."/>
            <person name="Pei G."/>
            <person name="Ma L."/>
        </authorList>
    </citation>
    <scope>INTERACTION WITH ARRB1</scope>
</reference>
<reference key="21">
    <citation type="journal article" date="2005" name="FEBS Lett.">
        <title>Serum/glucocorticoid-inducible kinase can phosphorylate the cyclic AMP response element binding protein, CREB.</title>
        <authorList>
            <person name="David S."/>
            <person name="Kalb R.G."/>
        </authorList>
    </citation>
    <scope>PHOSPHORYLATION AT SER-119 BY SGK1</scope>
    <scope>INTERACTION WITH SGK1</scope>
</reference>
<reference key="22">
    <citation type="journal article" date="2006" name="Mol. Cell. Biol.">
        <title>PGC-1-related coactivator: immediate early expression and characterization of a CREB/NRF-1 binding domain associated with cytochrome c promoter occupancy and respiratory growth.</title>
        <authorList>
            <person name="Vercauteren K."/>
            <person name="Pasko R.A."/>
            <person name="Gleyzer N."/>
            <person name="Marino V.M."/>
            <person name="Scarpulla R.C."/>
        </authorList>
    </citation>
    <scope>INTERACTION WITH PPRC1</scope>
</reference>
<reference key="23">
    <citation type="journal article" date="2007" name="Genes Chromosomes Cancer">
        <title>EWSR1-CREB1 is the predominant gene fusion in angiomatoid fibrous histiocytoma.</title>
        <authorList>
            <person name="Antonescu C.R."/>
            <person name="Dal Cin P."/>
            <person name="Nafa K."/>
            <person name="Teot L.A."/>
            <person name="Surti U."/>
            <person name="Fletcher C.D."/>
            <person name="Ladanyi M."/>
        </authorList>
    </citation>
    <scope>CHROMOSOMAL TRANSLOCATION WITH EWSR1</scope>
    <scope>ASSOCIATION WITH ANGIOMATOID FIBROUS HISTIOCYTOMA</scope>
</reference>
<reference key="24">
    <citation type="journal article" date="2007" name="Science">
        <title>ATM and ATR substrate analysis reveals extensive protein networks responsive to DNA damage.</title>
        <authorList>
            <person name="Matsuoka S."/>
            <person name="Ballif B.A."/>
            <person name="Smogorzewska A."/>
            <person name="McDonald E.R. III"/>
            <person name="Hurov K.E."/>
            <person name="Luo J."/>
            <person name="Bakalarski C.E."/>
            <person name="Zhao Z."/>
            <person name="Solimini N."/>
            <person name="Lerenthal Y."/>
            <person name="Shiloh Y."/>
            <person name="Gygi S.P."/>
            <person name="Elledge S.J."/>
        </authorList>
    </citation>
    <scope>IDENTIFICATION BY MASS SPECTROMETRY [LARGE SCALE ANALYSIS]</scope>
    <source>
        <tissue>Embryonic kidney</tissue>
    </source>
</reference>
<reference key="25">
    <citation type="journal article" date="2008" name="Proc. Natl. Acad. Sci. U.S.A.">
        <title>A quantitative atlas of mitotic phosphorylation.</title>
        <authorList>
            <person name="Dephoure N."/>
            <person name="Zhou C."/>
            <person name="Villen J."/>
            <person name="Beausoleil S.A."/>
            <person name="Bakalarski C.E."/>
            <person name="Elledge S.J."/>
            <person name="Gygi S.P."/>
        </authorList>
    </citation>
    <scope>IDENTIFICATION BY MASS SPECTROMETRY [LARGE SCALE ANALYSIS]</scope>
    <source>
        <tissue>Cervix carcinoma</tissue>
    </source>
</reference>
<reference key="26">
    <citation type="journal article" date="2009" name="Sci. Signal.">
        <title>Quantitative phosphoproteomic analysis of T cell receptor signaling reveals system-wide modulation of protein-protein interactions.</title>
        <authorList>
            <person name="Mayya V."/>
            <person name="Lundgren D.H."/>
            <person name="Hwang S.-I."/>
            <person name="Rezaul K."/>
            <person name="Wu L."/>
            <person name="Eng J.K."/>
            <person name="Rodionov V."/>
            <person name="Han D.K."/>
        </authorList>
    </citation>
    <scope>IDENTIFICATION BY MASS SPECTROMETRY [LARGE SCALE ANALYSIS]</scope>
    <source>
        <tissue>Leukemic T-cell</tissue>
    </source>
</reference>
<reference key="27">
    <citation type="journal article" date="2010" name="Mol. Biol. Cell">
        <title>Regulation of genotoxic stress response by homeodomain-interacting protein kinase 2 through phosphorylation of cyclic AMP response element-binding protein at serine 271.</title>
        <authorList>
            <person name="Sakamoto K."/>
            <person name="Huang B.-W."/>
            <person name="Iwasaki K."/>
            <person name="Hailemariam K."/>
            <person name="Ninomiya-Tsuji J."/>
            <person name="Tsuji Y."/>
        </authorList>
    </citation>
    <scope>PHOSPHORYLATION AT SER-257 BY HIPK2</scope>
    <scope>MUTAGENESIS OF SER-257</scope>
    <scope>INTERACTION WITH HIPK2</scope>
</reference>
<reference key="28">
    <citation type="journal article" date="2011" name="J. Cell Sci.">
        <title>TOX3 is a neuronal survival factor that induces transcription depending on the presence of CITED1 or phosphorylated CREB in the transcriptionally active complex.</title>
        <authorList>
            <person name="Dittmer S."/>
            <person name="Kovacs Z."/>
            <person name="Yuan S.H."/>
            <person name="Siszler G."/>
            <person name="Kogl M."/>
            <person name="Summer H."/>
            <person name="Geerts A."/>
            <person name="Golz S."/>
            <person name="Shioda T."/>
            <person name="Methner A."/>
        </authorList>
    </citation>
    <scope>INTERACTION WITH TOX3</scope>
    <scope>MUTAGENESIS OF SER-119</scope>
</reference>
<reference key="29">
    <citation type="journal article" date="2011" name="Sci. Signal.">
        <title>System-wide temporal characterization of the proteome and phosphoproteome of human embryonic stem cell differentiation.</title>
        <authorList>
            <person name="Rigbolt K.T."/>
            <person name="Prokhorova T.A."/>
            <person name="Akimov V."/>
            <person name="Henningsen J."/>
            <person name="Johansen P.T."/>
            <person name="Kratchmarova I."/>
            <person name="Kassem M."/>
            <person name="Mann M."/>
            <person name="Olsen J.V."/>
            <person name="Blagoev B."/>
        </authorList>
    </citation>
    <scope>IDENTIFICATION BY MASS SPECTROMETRY [LARGE SCALE ANALYSIS]</scope>
</reference>
<reference key="30">
    <citation type="journal article" date="2012" name="Hum. Mutat.">
        <title>A p.D116G mutation in CREB1 leads to novel multiple malformation syndrome resembling CrebA knockout mouse.</title>
        <authorList>
            <person name="Kitazawa S."/>
            <person name="Kondo T."/>
            <person name="Mori K."/>
            <person name="Yokoyama N."/>
            <person name="Matsuo M."/>
            <person name="Kitazawa R."/>
        </authorList>
    </citation>
    <scope>POSSIBLE INVOLVEMENT IN MULTIPLE CONGENITAL ANOMALIES</scope>
    <scope>VARIANT GLY-102</scope>
    <scope>CHARACTERIZATION OF VARIANT GLY-102</scope>
</reference>
<reference key="31">
    <citation type="journal article" date="2013" name="J. Proteome Res.">
        <title>Toward a comprehensive characterization of a human cancer cell phosphoproteome.</title>
        <authorList>
            <person name="Zhou H."/>
            <person name="Di Palma S."/>
            <person name="Preisinger C."/>
            <person name="Peng M."/>
            <person name="Polat A.N."/>
            <person name="Heck A.J."/>
            <person name="Mohammed S."/>
        </authorList>
    </citation>
    <scope>PHOSPHORYLATION [LARGE SCALE ANALYSIS] AT SER-128</scope>
    <scope>IDENTIFICATION BY MASS SPECTROMETRY [LARGE SCALE ANALYSIS]</scope>
    <source>
        <tissue>Cervix carcinoma</tissue>
        <tissue>Erythroleukemia</tissue>
    </source>
</reference>
<reference key="32">
    <citation type="journal article" date="2014" name="J. Proteomics">
        <title>An enzyme assisted RP-RPLC approach for in-depth analysis of human liver phosphoproteome.</title>
        <authorList>
            <person name="Bian Y."/>
            <person name="Song C."/>
            <person name="Cheng K."/>
            <person name="Dong M."/>
            <person name="Wang F."/>
            <person name="Huang J."/>
            <person name="Sun D."/>
            <person name="Wang L."/>
            <person name="Ye M."/>
            <person name="Zou H."/>
        </authorList>
    </citation>
    <scope>IDENTIFICATION BY MASS SPECTROMETRY [LARGE SCALE ANALYSIS]</scope>
    <source>
        <tissue>Liver</tissue>
    </source>
</reference>
<reference key="33">
    <citation type="journal article" date="2017" name="Nat. Struct. Mol. Biol.">
        <title>Site-specific mapping of the human SUMO proteome reveals co-modification with phosphorylation.</title>
        <authorList>
            <person name="Hendriks I.A."/>
            <person name="Lyon D."/>
            <person name="Young C."/>
            <person name="Jensen L.J."/>
            <person name="Vertegaal A.C."/>
            <person name="Nielsen M.L."/>
        </authorList>
    </citation>
    <scope>SUMOYLATION [LARGE SCALE ANALYSIS] AT LYS-122</scope>
    <scope>IDENTIFICATION BY MASS SPECTROMETRY [LARGE SCALE ANALYSIS]</scope>
</reference>
<reference evidence="26" key="34">
    <citation type="journal article" date="2013" name="ACS Chem. Biol.">
        <title>Allosteric communication in the KIX domain proceeds through dynamic repacking of the hydrophobic core.</title>
        <authorList>
            <person name="Bruschweiler S."/>
            <person name="Konrat R."/>
            <person name="Tollinger M."/>
        </authorList>
    </citation>
    <scope>STRUCTURE BY NMR OF 102-135 IN COMPLEX WITH KMT2A AND CREBBP</scope>
</reference>
<evidence type="ECO:0000250" key="1"/>
<evidence type="ECO:0000250" key="2">
    <source>
        <dbReference type="UniProtKB" id="P27925"/>
    </source>
</evidence>
<evidence type="ECO:0000250" key="3">
    <source>
        <dbReference type="UniProtKB" id="Q01147"/>
    </source>
</evidence>
<evidence type="ECO:0000255" key="4">
    <source>
        <dbReference type="PROSITE-ProRule" id="PRU00312"/>
    </source>
</evidence>
<evidence type="ECO:0000255" key="5">
    <source>
        <dbReference type="PROSITE-ProRule" id="PRU00978"/>
    </source>
</evidence>
<evidence type="ECO:0000256" key="6">
    <source>
        <dbReference type="SAM" id="MobiDB-lite"/>
    </source>
</evidence>
<evidence type="ECO:0000269" key="7">
    <source>
    </source>
</evidence>
<evidence type="ECO:0000269" key="8">
    <source>
    </source>
</evidence>
<evidence type="ECO:0000269" key="9">
    <source>
    </source>
</evidence>
<evidence type="ECO:0000269" key="10">
    <source>
    </source>
</evidence>
<evidence type="ECO:0000269" key="11">
    <source>
    </source>
</evidence>
<evidence type="ECO:0000269" key="12">
    <source>
    </source>
</evidence>
<evidence type="ECO:0000269" key="13">
    <source>
    </source>
</evidence>
<evidence type="ECO:0000269" key="14">
    <source>
    </source>
</evidence>
<evidence type="ECO:0000269" key="15">
    <source>
    </source>
</evidence>
<evidence type="ECO:0000269" key="16">
    <source>
    </source>
</evidence>
<evidence type="ECO:0000269" key="17">
    <source>
    </source>
</evidence>
<evidence type="ECO:0000269" key="18">
    <source>
    </source>
</evidence>
<evidence type="ECO:0000269" key="19">
    <source>
    </source>
</evidence>
<evidence type="ECO:0000269" key="20">
    <source>
    </source>
</evidence>
<evidence type="ECO:0000269" key="21">
    <source>
    </source>
</evidence>
<evidence type="ECO:0000269" key="22">
    <source>
    </source>
</evidence>
<evidence type="ECO:0000269" key="23">
    <source>
    </source>
</evidence>
<evidence type="ECO:0000269" key="24">
    <source>
    </source>
</evidence>
<evidence type="ECO:0000305" key="25"/>
<evidence type="ECO:0007744" key="26">
    <source>
        <dbReference type="PDB" id="2LXT"/>
    </source>
</evidence>
<evidence type="ECO:0007744" key="27">
    <source>
    </source>
</evidence>
<evidence type="ECO:0007744" key="28">
    <source>
    </source>
</evidence>
<evidence type="ECO:0007829" key="29">
    <source>
        <dbReference type="PDB" id="2LXT"/>
    </source>
</evidence>
<evidence type="ECO:0007829" key="30">
    <source>
        <dbReference type="PDB" id="5ZK1"/>
    </source>
</evidence>
<evidence type="ECO:0007829" key="31">
    <source>
        <dbReference type="PDB" id="7TBH"/>
    </source>
</evidence>
<gene>
    <name type="primary">CREB1</name>
</gene>
<dbReference type="EMBL" id="S72459">
    <property type="protein sequence ID" value="AAB20597.1"/>
    <property type="molecule type" value="Genomic_DNA"/>
</dbReference>
<dbReference type="EMBL" id="X55545">
    <property type="protein sequence ID" value="CAA39151.1"/>
    <property type="molecule type" value="mRNA"/>
</dbReference>
<dbReference type="EMBL" id="M34356">
    <property type="protein sequence ID" value="AAA35717.1"/>
    <property type="molecule type" value="mRNA"/>
</dbReference>
<dbReference type="EMBL" id="M34356">
    <property type="protein sequence ID" value="AAA35716.1"/>
    <property type="molecule type" value="mRNA"/>
</dbReference>
<dbReference type="EMBL" id="M27691">
    <property type="protein sequence ID" value="AAA35715.1"/>
    <property type="molecule type" value="mRNA"/>
</dbReference>
<dbReference type="EMBL" id="X60003">
    <property type="protein sequence ID" value="CAA42620.1"/>
    <property type="molecule type" value="mRNA"/>
</dbReference>
<dbReference type="EMBL" id="AY347527">
    <property type="protein sequence ID" value="AAQ24858.1"/>
    <property type="molecule type" value="mRNA"/>
</dbReference>
<dbReference type="EMBL" id="BC010636">
    <property type="protein sequence ID" value="AAH10636.1"/>
    <property type="molecule type" value="mRNA"/>
</dbReference>
<dbReference type="EMBL" id="S53724">
    <property type="protein sequence ID" value="AAD13869.1"/>
    <property type="molecule type" value="Genomic_DNA"/>
</dbReference>
<dbReference type="CCDS" id="CCDS2374.1">
    <molecule id="P16220-2"/>
</dbReference>
<dbReference type="CCDS" id="CCDS2375.1">
    <molecule id="P16220-1"/>
</dbReference>
<dbReference type="PIR" id="A37340">
    <property type="entry name" value="A35769"/>
</dbReference>
<dbReference type="PIR" id="B37340">
    <property type="entry name" value="B35769"/>
</dbReference>
<dbReference type="PIR" id="S22298">
    <property type="entry name" value="S22298"/>
</dbReference>
<dbReference type="RefSeq" id="NP_001358355.1">
    <molecule id="P16220-1"/>
    <property type="nucleotide sequence ID" value="NM_001371426.1"/>
</dbReference>
<dbReference type="RefSeq" id="NP_001358356.1">
    <molecule id="P16220-2"/>
    <property type="nucleotide sequence ID" value="NM_001371427.1"/>
</dbReference>
<dbReference type="RefSeq" id="NP_004370.1">
    <molecule id="P16220-2"/>
    <property type="nucleotide sequence ID" value="NM_004379.5"/>
</dbReference>
<dbReference type="RefSeq" id="NP_604391.1">
    <molecule id="P16220-1"/>
    <property type="nucleotide sequence ID" value="NM_134442.5"/>
</dbReference>
<dbReference type="RefSeq" id="XP_011508947.1">
    <property type="nucleotide sequence ID" value="XM_011510645.1"/>
</dbReference>
<dbReference type="RefSeq" id="XP_011508949.1">
    <property type="nucleotide sequence ID" value="XM_011510647.2"/>
</dbReference>
<dbReference type="RefSeq" id="XP_047299391.1">
    <molecule id="P16220-1"/>
    <property type="nucleotide sequence ID" value="XM_047443435.1"/>
</dbReference>
<dbReference type="RefSeq" id="XP_054196588.1">
    <molecule id="P16220-1"/>
    <property type="nucleotide sequence ID" value="XM_054340613.1"/>
</dbReference>
<dbReference type="PDB" id="2LXT">
    <property type="method" value="NMR"/>
    <property type="chains" value="C=102-135"/>
</dbReference>
<dbReference type="PDB" id="5ZK1">
    <property type="method" value="X-ray"/>
    <property type="resolution" value="3.05 A"/>
    <property type="chains" value="A=269-327"/>
</dbReference>
<dbReference type="PDB" id="5ZKO">
    <property type="method" value="X-ray"/>
    <property type="resolution" value="3.05 A"/>
    <property type="chains" value="A/C=269-327"/>
</dbReference>
<dbReference type="PDB" id="7TBH">
    <property type="method" value="EM"/>
    <property type="resolution" value="2.30 A"/>
    <property type="chains" value="a/b/c/d/e/f/g/h/i/j/k/l/m/n/o/p/q/r/s/t/u/v/w/x=114-132"/>
</dbReference>
<dbReference type="PDBsum" id="2LXT"/>
<dbReference type="PDBsum" id="5ZK1"/>
<dbReference type="PDBsum" id="5ZKO"/>
<dbReference type="PDBsum" id="7TBH"/>
<dbReference type="BMRB" id="P16220"/>
<dbReference type="SMR" id="P16220"/>
<dbReference type="BioGRID" id="107775">
    <property type="interactions" value="240"/>
</dbReference>
<dbReference type="ComplexPortal" id="CPX-2494">
    <property type="entry name" value="bZIP transcription factor complex, BACH1-CREB1"/>
</dbReference>
<dbReference type="ComplexPortal" id="CPX-6405">
    <property type="entry name" value="bZIP transcription factor complex, ATF1-CREB1"/>
</dbReference>
<dbReference type="ComplexPortal" id="CPX-8">
    <property type="entry name" value="bZIP transcription factor complex, ATF4-CREB1"/>
</dbReference>
<dbReference type="CORUM" id="P16220"/>
<dbReference type="DIP" id="DIP-765N"/>
<dbReference type="FunCoup" id="P16220">
    <property type="interactions" value="7373"/>
</dbReference>
<dbReference type="IntAct" id="P16220">
    <property type="interactions" value="138"/>
</dbReference>
<dbReference type="MINT" id="P16220"/>
<dbReference type="STRING" id="9606.ENSP00000387699"/>
<dbReference type="ChEMBL" id="CHEMBL5587"/>
<dbReference type="DrugBank" id="DB00131">
    <property type="generic name" value="Adenosine phosphate"/>
</dbReference>
<dbReference type="DrugBank" id="DB01183">
    <property type="generic name" value="Naloxone"/>
</dbReference>
<dbReference type="GlyCosmos" id="P16220">
    <property type="glycosylation" value="6 sites, 2 glycans"/>
</dbReference>
<dbReference type="GlyGen" id="P16220">
    <property type="glycosylation" value="7 sites, 3 O-linked glycans (6 sites)"/>
</dbReference>
<dbReference type="iPTMnet" id="P16220"/>
<dbReference type="MetOSite" id="P16220"/>
<dbReference type="PhosphoSitePlus" id="P16220"/>
<dbReference type="SwissPalm" id="P16220"/>
<dbReference type="BioMuta" id="CREB1"/>
<dbReference type="DMDM" id="117434"/>
<dbReference type="jPOST" id="P16220"/>
<dbReference type="MassIVE" id="P16220"/>
<dbReference type="PaxDb" id="9606-ENSP00000387699"/>
<dbReference type="PeptideAtlas" id="P16220"/>
<dbReference type="ProteomicsDB" id="53324">
    <molecule id="P16220-1"/>
</dbReference>
<dbReference type="ProteomicsDB" id="53325">
    <molecule id="P16220-2"/>
</dbReference>
<dbReference type="ProteomicsDB" id="53326">
    <molecule id="P16220-3"/>
</dbReference>
<dbReference type="Pumba" id="P16220"/>
<dbReference type="ABCD" id="P16220">
    <property type="antibodies" value="1 sequenced antibody"/>
</dbReference>
<dbReference type="Antibodypedia" id="3536">
    <property type="antibodies" value="2200 antibodies from 53 providers"/>
</dbReference>
<dbReference type="DNASU" id="1385"/>
<dbReference type="Ensembl" id="ENST00000353267.8">
    <molecule id="P16220-2"/>
    <property type="protein sequence ID" value="ENSP00000236995.3"/>
    <property type="gene ID" value="ENSG00000118260.15"/>
</dbReference>
<dbReference type="Ensembl" id="ENST00000430624.5">
    <molecule id="P16220-2"/>
    <property type="protein sequence ID" value="ENSP00000405539.1"/>
    <property type="gene ID" value="ENSG00000118260.15"/>
</dbReference>
<dbReference type="Ensembl" id="ENST00000432329.6">
    <molecule id="P16220-1"/>
    <property type="protein sequence ID" value="ENSP00000387699.2"/>
    <property type="gene ID" value="ENSG00000118260.15"/>
</dbReference>
<dbReference type="GeneID" id="1385"/>
<dbReference type="KEGG" id="hsa:1385"/>
<dbReference type="MANE-Select" id="ENST00000353267.8">
    <property type="protein sequence ID" value="ENSP00000236995.3"/>
    <property type="RefSeq nucleotide sequence ID" value="NM_004379.5"/>
    <property type="RefSeq protein sequence ID" value="NP_004370.1"/>
</dbReference>
<dbReference type="AGR" id="HGNC:2345"/>
<dbReference type="CTD" id="1385"/>
<dbReference type="DisGeNET" id="1385"/>
<dbReference type="GeneCards" id="CREB1"/>
<dbReference type="HGNC" id="HGNC:2345">
    <property type="gene designation" value="CREB1"/>
</dbReference>
<dbReference type="HPA" id="ENSG00000118260">
    <property type="expression patterns" value="Low tissue specificity"/>
</dbReference>
<dbReference type="MalaCards" id="CREB1"/>
<dbReference type="MIM" id="123810">
    <property type="type" value="gene"/>
</dbReference>
<dbReference type="MIM" id="612160">
    <property type="type" value="phenotype"/>
</dbReference>
<dbReference type="neXtProt" id="NX_P16220"/>
<dbReference type="OpenTargets" id="ENSG00000118260"/>
<dbReference type="Orphanet" id="97338">
    <property type="disease" value="Melanoma of soft tissue"/>
</dbReference>
<dbReference type="PharmGKB" id="PA26864"/>
<dbReference type="VEuPathDB" id="HostDB:ENSG00000118260"/>
<dbReference type="eggNOG" id="KOG3584">
    <property type="taxonomic scope" value="Eukaryota"/>
</dbReference>
<dbReference type="GeneTree" id="ENSGT00940000155408"/>
<dbReference type="InParanoid" id="P16220"/>
<dbReference type="OMA" id="TIAQVSM"/>
<dbReference type="OrthoDB" id="5970722at2759"/>
<dbReference type="PAN-GO" id="P16220">
    <property type="GO annotations" value="4 GO annotations based on evolutionary models"/>
</dbReference>
<dbReference type="PhylomeDB" id="P16220"/>
<dbReference type="TreeFam" id="TF106464"/>
<dbReference type="PathwayCommons" id="P16220"/>
<dbReference type="Reactome" id="R-HSA-111931">
    <molecule id="P16220-1"/>
    <property type="pathway name" value="PKA-mediated phosphorylation of CREB"/>
</dbReference>
<dbReference type="Reactome" id="R-HSA-111932">
    <molecule id="P16220-1"/>
    <property type="pathway name" value="CaMK IV-mediated phosphorylation of CREB"/>
</dbReference>
<dbReference type="Reactome" id="R-HSA-198693">
    <molecule id="P16220-1"/>
    <property type="pathway name" value="AKT phosphorylates targets in the nucleus"/>
</dbReference>
<dbReference type="Reactome" id="R-HSA-199920">
    <molecule id="P16220-1"/>
    <property type="pathway name" value="CREB phosphorylation"/>
</dbReference>
<dbReference type="Reactome" id="R-HSA-2151201">
    <molecule id="P16220-1"/>
    <property type="pathway name" value="Transcriptional activation of mitochondrial biogenesis"/>
</dbReference>
<dbReference type="Reactome" id="R-HSA-2197563">
    <molecule id="P16220-1"/>
    <property type="pathway name" value="NOTCH2 intracellular domain regulates transcription"/>
</dbReference>
<dbReference type="Reactome" id="R-HSA-375165">
    <molecule id="P16220-1"/>
    <property type="pathway name" value="NCAM signaling for neurite out-growth"/>
</dbReference>
<dbReference type="Reactome" id="R-HSA-400253">
    <molecule id="P16220-1"/>
    <property type="pathway name" value="Circadian Clock"/>
</dbReference>
<dbReference type="Reactome" id="R-HSA-442720">
    <molecule id="P16220-1"/>
    <property type="pathway name" value="CREB1 phosphorylation through the activation of Adenylate Cyclase"/>
</dbReference>
<dbReference type="Reactome" id="R-HSA-442729">
    <molecule id="P16220-1"/>
    <property type="pathway name" value="CREB1 phosphorylation through the activation of CaMKII/CaMKK/CaMKIV cascasde"/>
</dbReference>
<dbReference type="Reactome" id="R-HSA-442742">
    <molecule id="P16220-1"/>
    <property type="pathway name" value="CREB1 phosphorylation through NMDA receptor-mediated activation of RAS signaling"/>
</dbReference>
<dbReference type="Reactome" id="R-HSA-5674400">
    <molecule id="P16220-1"/>
    <property type="pathway name" value="Constitutive Signaling by AKT1 E17K in Cancer"/>
</dbReference>
<dbReference type="Reactome" id="R-HSA-881907">
    <molecule id="P16220-1"/>
    <property type="pathway name" value="Gastrin-CREB signalling pathway via PKC and MAPK"/>
</dbReference>
<dbReference type="Reactome" id="R-HSA-9022692">
    <molecule id="P16220-1"/>
    <property type="pathway name" value="Regulation of MECP2 expression and activity"/>
</dbReference>
<dbReference type="Reactome" id="R-HSA-9022699">
    <molecule id="P16220-1"/>
    <property type="pathway name" value="MECP2 regulates neuronal receptors and channels"/>
</dbReference>
<dbReference type="Reactome" id="R-HSA-9022702">
    <molecule id="P16220-1"/>
    <property type="pathway name" value="MECP2 regulates transcription of neuronal ligands"/>
</dbReference>
<dbReference type="Reactome" id="R-HSA-9022707">
    <molecule id="P16220-1"/>
    <property type="pathway name" value="MECP2 regulates transcription factors"/>
</dbReference>
<dbReference type="Reactome" id="R-HSA-9031628">
    <molecule id="P16220-1"/>
    <property type="pathway name" value="NGF-stimulated transcription"/>
</dbReference>
<dbReference type="Reactome" id="R-HSA-9609690">
    <molecule id="P16220-1"/>
    <property type="pathway name" value="HCMV Early Events"/>
</dbReference>
<dbReference type="Reactome" id="R-HSA-9616222">
    <molecule id="P16220-1"/>
    <property type="pathway name" value="Transcriptional regulation of granulopoiesis"/>
</dbReference>
<dbReference type="Reactome" id="R-HSA-9634638">
    <molecule id="P16220-1"/>
    <property type="pathway name" value="Estrogen-dependent nuclear events downstream of ESR-membrane signaling"/>
</dbReference>
<dbReference type="Reactome" id="R-HSA-9660821">
    <molecule id="P16220-1"/>
    <property type="pathway name" value="ADORA2B mediated anti-inflammatory cytokines production"/>
</dbReference>
<dbReference type="Reactome" id="R-HSA-9664323">
    <molecule id="P16220-1"/>
    <property type="pathway name" value="FCGR3A-mediated IL10 synthesis"/>
</dbReference>
<dbReference type="Reactome" id="R-HSA-9707616">
    <molecule id="P16220-1"/>
    <property type="pathway name" value="Heme signaling"/>
</dbReference>
<dbReference type="Reactome" id="R-HSA-9824585">
    <molecule id="P16220-1"/>
    <property type="pathway name" value="Regulation of MITF-M-dependent genes involved in pigmentation"/>
</dbReference>
<dbReference type="Reactome" id="R-HSA-9856649">
    <molecule id="P16220-1"/>
    <property type="pathway name" value="Transcriptional and post-translational regulation of MITF-M expression and activity"/>
</dbReference>
<dbReference type="SignaLink" id="P16220"/>
<dbReference type="SIGNOR" id="P16220"/>
<dbReference type="BioGRID-ORCS" id="1385">
    <property type="hits" value="41 hits in 1190 CRISPR screens"/>
</dbReference>
<dbReference type="ChiTaRS" id="CREB1">
    <property type="organism name" value="human"/>
</dbReference>
<dbReference type="EvolutionaryTrace" id="P16220"/>
<dbReference type="GeneWiki" id="CREB1"/>
<dbReference type="GenomeRNAi" id="1385"/>
<dbReference type="Pharos" id="P16220">
    <property type="development level" value="Tbio"/>
</dbReference>
<dbReference type="PRO" id="PR:P16220"/>
<dbReference type="Proteomes" id="UP000005640">
    <property type="component" value="Chromosome 2"/>
</dbReference>
<dbReference type="RNAct" id="P16220">
    <property type="molecule type" value="protein"/>
</dbReference>
<dbReference type="Bgee" id="ENSG00000118260">
    <property type="expression patterns" value="Expressed in secondary oocyte and 215 other cell types or tissues"/>
</dbReference>
<dbReference type="ExpressionAtlas" id="P16220">
    <property type="expression patterns" value="baseline and differential"/>
</dbReference>
<dbReference type="GO" id="GO:1990589">
    <property type="term" value="C:ATF4-CREB1 transcription factor complex"/>
    <property type="evidence" value="ECO:0000314"/>
    <property type="project" value="ParkinsonsUK-UCL"/>
</dbReference>
<dbReference type="GO" id="GO:0030424">
    <property type="term" value="C:axon"/>
    <property type="evidence" value="ECO:0007669"/>
    <property type="project" value="Ensembl"/>
</dbReference>
<dbReference type="GO" id="GO:0005813">
    <property type="term" value="C:centrosome"/>
    <property type="evidence" value="ECO:0000314"/>
    <property type="project" value="HPA"/>
</dbReference>
<dbReference type="GO" id="GO:0000785">
    <property type="term" value="C:chromatin"/>
    <property type="evidence" value="ECO:0000247"/>
    <property type="project" value="NTNU_SB"/>
</dbReference>
<dbReference type="GO" id="GO:0036064">
    <property type="term" value="C:ciliary basal body"/>
    <property type="evidence" value="ECO:0000314"/>
    <property type="project" value="HPA"/>
</dbReference>
<dbReference type="GO" id="GO:0005829">
    <property type="term" value="C:cytosol"/>
    <property type="evidence" value="ECO:0000314"/>
    <property type="project" value="HPA"/>
</dbReference>
<dbReference type="GO" id="GO:0000791">
    <property type="term" value="C:euchromatin"/>
    <property type="evidence" value="ECO:0000314"/>
    <property type="project" value="BHF-UCL"/>
</dbReference>
<dbReference type="GO" id="GO:0005759">
    <property type="term" value="C:mitochondrial matrix"/>
    <property type="evidence" value="ECO:0007669"/>
    <property type="project" value="Ensembl"/>
</dbReference>
<dbReference type="GO" id="GO:0005654">
    <property type="term" value="C:nucleoplasm"/>
    <property type="evidence" value="ECO:0000314"/>
    <property type="project" value="HPA"/>
</dbReference>
<dbReference type="GO" id="GO:0005634">
    <property type="term" value="C:nucleus"/>
    <property type="evidence" value="ECO:0000314"/>
    <property type="project" value="MGI"/>
</dbReference>
<dbReference type="GO" id="GO:0090575">
    <property type="term" value="C:RNA polymerase II transcription regulator complex"/>
    <property type="evidence" value="ECO:0000353"/>
    <property type="project" value="ComplexPortal"/>
</dbReference>
<dbReference type="GO" id="GO:1990763">
    <property type="term" value="F:arrestin family protein binding"/>
    <property type="evidence" value="ECO:0007669"/>
    <property type="project" value="Ensembl"/>
</dbReference>
<dbReference type="GO" id="GO:0035497">
    <property type="term" value="F:cAMP response element binding"/>
    <property type="evidence" value="ECO:0000314"/>
    <property type="project" value="BHF-UCL"/>
</dbReference>
<dbReference type="GO" id="GO:0001228">
    <property type="term" value="F:DNA-binding transcription activator activity, RNA polymerase II-specific"/>
    <property type="evidence" value="ECO:0000314"/>
    <property type="project" value="BHF-UCL"/>
</dbReference>
<dbReference type="GO" id="GO:0003700">
    <property type="term" value="F:DNA-binding transcription factor activity"/>
    <property type="evidence" value="ECO:0000314"/>
    <property type="project" value="MGI"/>
</dbReference>
<dbReference type="GO" id="GO:0000981">
    <property type="term" value="F:DNA-binding transcription factor activity, RNA polymerase II-specific"/>
    <property type="evidence" value="ECO:0000314"/>
    <property type="project" value="BHF-UCL"/>
</dbReference>
<dbReference type="GO" id="GO:0019899">
    <property type="term" value="F:enzyme binding"/>
    <property type="evidence" value="ECO:0000353"/>
    <property type="project" value="UniProtKB"/>
</dbReference>
<dbReference type="GO" id="GO:0035035">
    <property type="term" value="F:histone acetyltransferase binding"/>
    <property type="evidence" value="ECO:0007669"/>
    <property type="project" value="Ensembl"/>
</dbReference>
<dbReference type="GO" id="GO:0030544">
    <property type="term" value="F:Hsp70 protein binding"/>
    <property type="evidence" value="ECO:0007669"/>
    <property type="project" value="Ensembl"/>
</dbReference>
<dbReference type="GO" id="GO:0042802">
    <property type="term" value="F:identical protein binding"/>
    <property type="evidence" value="ECO:0000353"/>
    <property type="project" value="IntAct"/>
</dbReference>
<dbReference type="GO" id="GO:0000978">
    <property type="term" value="F:RNA polymerase II cis-regulatory region sequence-specific DNA binding"/>
    <property type="evidence" value="ECO:0000314"/>
    <property type="project" value="BHF-UCL"/>
</dbReference>
<dbReference type="GO" id="GO:0061629">
    <property type="term" value="F:RNA polymerase II-specific DNA-binding transcription factor binding"/>
    <property type="evidence" value="ECO:0000353"/>
    <property type="project" value="BHF-UCL"/>
</dbReference>
<dbReference type="GO" id="GO:1990837">
    <property type="term" value="F:sequence-specific double-stranded DNA binding"/>
    <property type="evidence" value="ECO:0000314"/>
    <property type="project" value="ARUK-UCL"/>
</dbReference>
<dbReference type="GO" id="GO:0001223">
    <property type="term" value="F:transcription coactivator binding"/>
    <property type="evidence" value="ECO:0007669"/>
    <property type="project" value="Ensembl"/>
</dbReference>
<dbReference type="GO" id="GO:0007409">
    <property type="term" value="P:axonogenesis"/>
    <property type="evidence" value="ECO:0007669"/>
    <property type="project" value="Ensembl"/>
</dbReference>
<dbReference type="GO" id="GO:0141156">
    <property type="term" value="P:cAMP/PKA signal transduction"/>
    <property type="evidence" value="ECO:0000314"/>
    <property type="project" value="MGI"/>
</dbReference>
<dbReference type="GO" id="GO:0071398">
    <property type="term" value="P:cellular response to fatty acid"/>
    <property type="evidence" value="ECO:0007669"/>
    <property type="project" value="Ensembl"/>
</dbReference>
<dbReference type="GO" id="GO:1904322">
    <property type="term" value="P:cellular response to forskolin"/>
    <property type="evidence" value="ECO:0000314"/>
    <property type="project" value="MGI"/>
</dbReference>
<dbReference type="GO" id="GO:0035729">
    <property type="term" value="P:cellular response to hepatocyte growth factor stimulus"/>
    <property type="evidence" value="ECO:0007669"/>
    <property type="project" value="Ensembl"/>
</dbReference>
<dbReference type="GO" id="GO:1990314">
    <property type="term" value="P:cellular response to insulin-like growth factor stimulus"/>
    <property type="evidence" value="ECO:0007669"/>
    <property type="project" value="Ensembl"/>
</dbReference>
<dbReference type="GO" id="GO:1990830">
    <property type="term" value="P:cellular response to leukemia inhibitory factor"/>
    <property type="evidence" value="ECO:0007669"/>
    <property type="project" value="Ensembl"/>
</dbReference>
<dbReference type="GO" id="GO:1990090">
    <property type="term" value="P:cellular response to nerve growth factor stimulus"/>
    <property type="evidence" value="ECO:0007669"/>
    <property type="project" value="Ensembl"/>
</dbReference>
<dbReference type="GO" id="GO:0036120">
    <property type="term" value="P:cellular response to platelet-derived growth factor stimulus"/>
    <property type="evidence" value="ECO:0007669"/>
    <property type="project" value="Ensembl"/>
</dbReference>
<dbReference type="GO" id="GO:0071300">
    <property type="term" value="P:cellular response to retinoic acid"/>
    <property type="evidence" value="ECO:0000250"/>
    <property type="project" value="ARUK-UCL"/>
</dbReference>
<dbReference type="GO" id="GO:0071294">
    <property type="term" value="P:cellular response to zinc ion"/>
    <property type="evidence" value="ECO:0007669"/>
    <property type="project" value="Ensembl"/>
</dbReference>
<dbReference type="GO" id="GO:0034670">
    <property type="term" value="P:chemotaxis to arachidonate"/>
    <property type="evidence" value="ECO:0007669"/>
    <property type="project" value="Ensembl"/>
</dbReference>
<dbReference type="GO" id="GO:0007623">
    <property type="term" value="P:circadian rhythm"/>
    <property type="evidence" value="ECO:0000250"/>
    <property type="project" value="UniProtKB"/>
</dbReference>
<dbReference type="GO" id="GO:0046879">
    <property type="term" value="P:hormone secretion"/>
    <property type="evidence" value="ECO:0007669"/>
    <property type="project" value="Ensembl"/>
</dbReference>
<dbReference type="GO" id="GO:0007595">
    <property type="term" value="P:lactation"/>
    <property type="evidence" value="ECO:0007669"/>
    <property type="project" value="Ensembl"/>
</dbReference>
<dbReference type="GO" id="GO:0060430">
    <property type="term" value="P:lung saccule development"/>
    <property type="evidence" value="ECO:0007669"/>
    <property type="project" value="Ensembl"/>
</dbReference>
<dbReference type="GO" id="GO:0007613">
    <property type="term" value="P:memory"/>
    <property type="evidence" value="ECO:0007669"/>
    <property type="project" value="Ensembl"/>
</dbReference>
<dbReference type="GO" id="GO:0042789">
    <property type="term" value="P:mRNA transcription by RNA polymerase II"/>
    <property type="evidence" value="ECO:0000314"/>
    <property type="project" value="MGI"/>
</dbReference>
<dbReference type="GO" id="GO:0043066">
    <property type="term" value="P:negative regulation of apoptotic process"/>
    <property type="evidence" value="ECO:0000250"/>
    <property type="project" value="UniProtKB"/>
</dbReference>
<dbReference type="GO" id="GO:0010629">
    <property type="term" value="P:negative regulation of gene expression"/>
    <property type="evidence" value="ECO:0007669"/>
    <property type="project" value="Ensembl"/>
</dbReference>
<dbReference type="GO" id="GO:0010944">
    <property type="term" value="P:negative regulation of transcription by competitive promoter binding"/>
    <property type="evidence" value="ECO:0000314"/>
    <property type="project" value="BHF-UCL"/>
</dbReference>
<dbReference type="GO" id="GO:0030316">
    <property type="term" value="P:osteoclast differentiation"/>
    <property type="evidence" value="ECO:0007669"/>
    <property type="project" value="Ensembl"/>
</dbReference>
<dbReference type="GO" id="GO:0021983">
    <property type="term" value="P:pituitary gland development"/>
    <property type="evidence" value="ECO:0007669"/>
    <property type="project" value="Ensembl"/>
</dbReference>
<dbReference type="GO" id="GO:0043065">
    <property type="term" value="P:positive regulation of apoptotic process"/>
    <property type="evidence" value="ECO:0007669"/>
    <property type="project" value="Ensembl"/>
</dbReference>
<dbReference type="GO" id="GO:0055025">
    <property type="term" value="P:positive regulation of cardiac muscle tissue development"/>
    <property type="evidence" value="ECO:0007669"/>
    <property type="project" value="Ensembl"/>
</dbReference>
<dbReference type="GO" id="GO:0045893">
    <property type="term" value="P:positive regulation of DNA-templated transcription"/>
    <property type="evidence" value="ECO:0000250"/>
    <property type="project" value="UniProtKB"/>
</dbReference>
<dbReference type="GO" id="GO:0045600">
    <property type="term" value="P:positive regulation of fat cell differentiation"/>
    <property type="evidence" value="ECO:0000250"/>
    <property type="project" value="UniProtKB"/>
</dbReference>
<dbReference type="GO" id="GO:0046887">
    <property type="term" value="P:positive regulation of hormone secretion"/>
    <property type="evidence" value="ECO:0007669"/>
    <property type="project" value="Ensembl"/>
</dbReference>
<dbReference type="GO" id="GO:0046889">
    <property type="term" value="P:positive regulation of lipid biosynthetic process"/>
    <property type="evidence" value="ECO:0000250"/>
    <property type="project" value="UniProtKB"/>
</dbReference>
<dbReference type="GO" id="GO:1900273">
    <property type="term" value="P:positive regulation of long-term synaptic potentiation"/>
    <property type="evidence" value="ECO:0007669"/>
    <property type="project" value="Ensembl"/>
</dbReference>
<dbReference type="GO" id="GO:1904181">
    <property type="term" value="P:positive regulation of membrane depolarization"/>
    <property type="evidence" value="ECO:0007669"/>
    <property type="project" value="Ensembl"/>
</dbReference>
<dbReference type="GO" id="GO:0040018">
    <property type="term" value="P:positive regulation of multicellular organism growth"/>
    <property type="evidence" value="ECO:0007669"/>
    <property type="project" value="Ensembl"/>
</dbReference>
<dbReference type="GO" id="GO:0045672">
    <property type="term" value="P:positive regulation of osteoclast differentiation"/>
    <property type="evidence" value="ECO:0007669"/>
    <property type="project" value="Ensembl"/>
</dbReference>
<dbReference type="GO" id="GO:0045899">
    <property type="term" value="P:positive regulation of RNA polymerase II transcription preinitiation complex assembly"/>
    <property type="evidence" value="ECO:0007669"/>
    <property type="project" value="Ensembl"/>
</dbReference>
<dbReference type="GO" id="GO:0045944">
    <property type="term" value="P:positive regulation of transcription by RNA polymerase II"/>
    <property type="evidence" value="ECO:0000314"/>
    <property type="project" value="NTNU_SB"/>
</dbReference>
<dbReference type="GO" id="GO:0032916">
    <property type="term" value="P:positive regulation of transforming growth factor beta3 production"/>
    <property type="evidence" value="ECO:0007669"/>
    <property type="project" value="Ensembl"/>
</dbReference>
<dbReference type="GO" id="GO:0006468">
    <property type="term" value="P:protein phosphorylation"/>
    <property type="evidence" value="ECO:0000314"/>
    <property type="project" value="MGI"/>
</dbReference>
<dbReference type="GO" id="GO:0050821">
    <property type="term" value="P:protein stabilization"/>
    <property type="evidence" value="ECO:0000250"/>
    <property type="project" value="UniProtKB"/>
</dbReference>
<dbReference type="GO" id="GO:0008361">
    <property type="term" value="P:regulation of cell size"/>
    <property type="evidence" value="ECO:0007669"/>
    <property type="project" value="Ensembl"/>
</dbReference>
<dbReference type="GO" id="GO:0048145">
    <property type="term" value="P:regulation of fibroblast proliferation"/>
    <property type="evidence" value="ECO:0007669"/>
    <property type="project" value="Ensembl"/>
</dbReference>
<dbReference type="GO" id="GO:0060251">
    <property type="term" value="P:regulation of glial cell proliferation"/>
    <property type="evidence" value="ECO:0007669"/>
    <property type="project" value="Ensembl"/>
</dbReference>
<dbReference type="GO" id="GO:2000224">
    <property type="term" value="P:regulation of testosterone biosynthetic process"/>
    <property type="evidence" value="ECO:0007669"/>
    <property type="project" value="Ensembl"/>
</dbReference>
<dbReference type="GO" id="GO:0006357">
    <property type="term" value="P:regulation of transcription by RNA polymerase II"/>
    <property type="evidence" value="ECO:0000266"/>
    <property type="project" value="ComplexPortal"/>
</dbReference>
<dbReference type="GO" id="GO:0014823">
    <property type="term" value="P:response to activity"/>
    <property type="evidence" value="ECO:0007669"/>
    <property type="project" value="Ensembl"/>
</dbReference>
<dbReference type="GO" id="GO:0042220">
    <property type="term" value="P:response to cocaine"/>
    <property type="evidence" value="ECO:0007669"/>
    <property type="project" value="Ensembl"/>
</dbReference>
<dbReference type="GO" id="GO:1903494">
    <property type="term" value="P:response to dehydroepiandrosterone"/>
    <property type="evidence" value="ECO:0007669"/>
    <property type="project" value="Ensembl"/>
</dbReference>
<dbReference type="GO" id="GO:0036017">
    <property type="term" value="P:response to erythropoietin"/>
    <property type="evidence" value="ECO:0007669"/>
    <property type="project" value="Ensembl"/>
</dbReference>
<dbReference type="GO" id="GO:0045471">
    <property type="term" value="P:response to ethanol"/>
    <property type="evidence" value="ECO:0007669"/>
    <property type="project" value="Ensembl"/>
</dbReference>
<dbReference type="GO" id="GO:0033762">
    <property type="term" value="P:response to glucagon"/>
    <property type="evidence" value="ECO:0000250"/>
    <property type="project" value="UniProtKB"/>
</dbReference>
<dbReference type="GO" id="GO:1990910">
    <property type="term" value="P:response to hypobaric hypoxia"/>
    <property type="evidence" value="ECO:0007669"/>
    <property type="project" value="Ensembl"/>
</dbReference>
<dbReference type="GO" id="GO:1902065">
    <property type="term" value="P:response to L-glutamate"/>
    <property type="evidence" value="ECO:0007669"/>
    <property type="project" value="Ensembl"/>
</dbReference>
<dbReference type="GO" id="GO:0043278">
    <property type="term" value="P:response to morphine"/>
    <property type="evidence" value="ECO:0007669"/>
    <property type="project" value="Ensembl"/>
</dbReference>
<dbReference type="GO" id="GO:0035094">
    <property type="term" value="P:response to nicotine"/>
    <property type="evidence" value="ECO:0007669"/>
    <property type="project" value="Ensembl"/>
</dbReference>
<dbReference type="GO" id="GO:0014074">
    <property type="term" value="P:response to purine-containing compound"/>
    <property type="evidence" value="ECO:0000314"/>
    <property type="project" value="MGI"/>
</dbReference>
<dbReference type="GO" id="GO:0009410">
    <property type="term" value="P:response to xenobiotic stimulus"/>
    <property type="evidence" value="ECO:0007669"/>
    <property type="project" value="Ensembl"/>
</dbReference>
<dbReference type="GO" id="GO:0033363">
    <property type="term" value="P:secretory granule organization"/>
    <property type="evidence" value="ECO:0007669"/>
    <property type="project" value="Ensembl"/>
</dbReference>
<dbReference type="GO" id="GO:0007165">
    <property type="term" value="P:signal transduction"/>
    <property type="evidence" value="ECO:0000304"/>
    <property type="project" value="ProtInc"/>
</dbReference>
<dbReference type="GO" id="GO:0007179">
    <property type="term" value="P:transforming growth factor beta receptor signaling pathway"/>
    <property type="evidence" value="ECO:0007669"/>
    <property type="project" value="Ensembl"/>
</dbReference>
<dbReference type="GO" id="GO:0060509">
    <property type="term" value="P:type I pneumocyte differentiation"/>
    <property type="evidence" value="ECO:0007669"/>
    <property type="project" value="Ensembl"/>
</dbReference>
<dbReference type="GO" id="GO:0008542">
    <property type="term" value="P:visual learning"/>
    <property type="evidence" value="ECO:0007669"/>
    <property type="project" value="Ensembl"/>
</dbReference>
<dbReference type="CDD" id="cd14690">
    <property type="entry name" value="bZIP_CREB1"/>
    <property type="match status" value="1"/>
</dbReference>
<dbReference type="DisProt" id="DP02003"/>
<dbReference type="FunFam" id="1.20.5.170:FF:000003">
    <property type="entry name" value="cAMP-responsive element modulator isoform X2"/>
    <property type="match status" value="1"/>
</dbReference>
<dbReference type="Gene3D" id="1.20.5.170">
    <property type="match status" value="1"/>
</dbReference>
<dbReference type="IDEAL" id="IID00442"/>
<dbReference type="InterPro" id="IPR004827">
    <property type="entry name" value="bZIP"/>
</dbReference>
<dbReference type="InterPro" id="IPR046347">
    <property type="entry name" value="bZIP_sf"/>
</dbReference>
<dbReference type="InterPro" id="IPR003102">
    <property type="entry name" value="CREB1-like_pKID"/>
</dbReference>
<dbReference type="InterPro" id="IPR001630">
    <property type="entry name" value="Leuzip_CREB"/>
</dbReference>
<dbReference type="PANTHER" id="PTHR45879">
    <property type="entry name" value="CYCLIC AMP RESPONSE ELEMENT-BINDING PROTEIN B"/>
    <property type="match status" value="1"/>
</dbReference>
<dbReference type="PANTHER" id="PTHR45879:SF1">
    <property type="entry name" value="CYCLIC AMP-RESPONSIVE ELEMENT-BINDING PROTEIN 1"/>
    <property type="match status" value="1"/>
</dbReference>
<dbReference type="Pfam" id="PF00170">
    <property type="entry name" value="bZIP_1"/>
    <property type="match status" value="1"/>
</dbReference>
<dbReference type="Pfam" id="PF02173">
    <property type="entry name" value="pKID"/>
    <property type="match status" value="1"/>
</dbReference>
<dbReference type="PRINTS" id="PR00041">
    <property type="entry name" value="LEUZIPPRCREB"/>
</dbReference>
<dbReference type="SMART" id="SM00338">
    <property type="entry name" value="BRLZ"/>
    <property type="match status" value="1"/>
</dbReference>
<dbReference type="SUPFAM" id="SSF57959">
    <property type="entry name" value="Leucine zipper domain"/>
    <property type="match status" value="1"/>
</dbReference>
<dbReference type="PROSITE" id="PS50217">
    <property type="entry name" value="BZIP"/>
    <property type="match status" value="1"/>
</dbReference>
<dbReference type="PROSITE" id="PS00036">
    <property type="entry name" value="BZIP_BASIC"/>
    <property type="match status" value="1"/>
</dbReference>
<dbReference type="PROSITE" id="PS50953">
    <property type="entry name" value="KID"/>
    <property type="match status" value="1"/>
</dbReference>
<feature type="chain" id="PRO_0000076597" description="Cyclic AMP-responsive element-binding protein 1">
    <location>
        <begin position="1"/>
        <end position="327"/>
    </location>
</feature>
<feature type="domain" description="KID" evidence="4">
    <location>
        <begin position="87"/>
        <end position="146"/>
    </location>
</feature>
<feature type="domain" description="bZIP" evidence="5">
    <location>
        <begin position="269"/>
        <end position="327"/>
    </location>
</feature>
<feature type="region of interest" description="Disordered" evidence="6">
    <location>
        <begin position="1"/>
        <end position="26"/>
    </location>
</feature>
<feature type="region of interest" description="Disordered" evidence="6">
    <location>
        <begin position="94"/>
        <end position="113"/>
    </location>
</feature>
<feature type="region of interest" description="Disordered" evidence="6">
    <location>
        <begin position="125"/>
        <end position="148"/>
    </location>
</feature>
<feature type="region of interest" description="Basic motif" evidence="5">
    <location>
        <begin position="270"/>
        <end position="295"/>
    </location>
</feature>
<feature type="region of interest" description="Leucine-zipper" evidence="5">
    <location>
        <begin position="297"/>
        <end position="318"/>
    </location>
</feature>
<feature type="site" description="Required for binding TORCs">
    <location>
        <position position="300"/>
    </location>
</feature>
<feature type="modified residue" description="Phosphoserine; by CaMK1, CaMK2, CaMK4, PKB/AKT1 or PKB/AKT2, RPS6KA3, RPS6KA4, RPS6KA5, SGK1 and TSSK4" evidence="4 12 13 21 22 23 24">
    <location>
        <position position="119"/>
    </location>
</feature>
<feature type="modified residue" description="Phosphoserine" evidence="27">
    <location>
        <position position="128"/>
    </location>
</feature>
<feature type="modified residue" description="Phosphoserine; by HIPK2" evidence="4 17">
    <location>
        <position position="257"/>
    </location>
</feature>
<feature type="cross-link" description="Glycyl lysine isopeptide (Lys-Gly) (interchain with G-Cter in SUMO2)" evidence="28">
    <location>
        <position position="122"/>
    </location>
</feature>
<feature type="cross-link" description="Glycyl lysine isopeptide (Lys-Gly) (interchain with G-Cter in SUMO1)" evidence="7">
    <location>
        <position position="271"/>
    </location>
</feature>
<feature type="cross-link" description="Glycyl lysine isopeptide (Lys-Gly) (interchain with G-Cter in SUMO1)" evidence="7">
    <location>
        <position position="290"/>
    </location>
</feature>
<feature type="splice variant" id="VSP_060702" description="In isoform 2 and isoform 3." evidence="25">
    <original>V</original>
    <variation>VQSSCKDLKRLFSGT</variation>
    <location>
        <position position="86"/>
    </location>
</feature>
<feature type="splice variant" id="VSP_060703" description="In isoform 3." evidence="25">
    <location>
        <begin position="148"/>
        <end position="258"/>
    </location>
</feature>
<feature type="sequence variant" id="VAR_068077" description="Found in a patient with multiple congenital anomalies; does not affect CREB1 phosphorylation at S-119; fails to interact with CREBBP; dbSNP:rs387906617." evidence="19">
    <original>D</original>
    <variation>G</variation>
    <location>
        <position position="102"/>
    </location>
</feature>
<feature type="mutagenesis site" description="Does not interact with TOX3 and inhibits induction of transcription by TOX3. Loss of phosphorylation by CaMK4. Loss of phosphorylation by TSSK4." evidence="13 18 22">
    <original>S</original>
    <variation>A</variation>
    <location>
        <position position="119"/>
    </location>
</feature>
<feature type="mutagenesis site" description="No effect on sumoylation." evidence="7">
    <original>K</original>
    <variation>R</variation>
    <location>
        <position position="141"/>
    </location>
</feature>
<feature type="mutagenesis site" description="Impaired phosphorylation by HIPK2 and subsequent transactivation." evidence="17">
    <original>S</original>
    <variation>A</variation>
    <location>
        <position position="257"/>
    </location>
</feature>
<feature type="mutagenesis site" description="Potentiated transactivation." evidence="17">
    <original>S</original>
    <variation>E</variation>
    <location>
        <position position="257"/>
    </location>
</feature>
<feature type="mutagenesis site" description="Decreased sumoylation, in vivo and in vitro." evidence="7">
    <original>K</original>
    <variation>R</variation>
    <location>
        <position position="271"/>
    </location>
</feature>
<feature type="mutagenesis site" description="Decreased sumoylation, in vivo and in vitro. Loss of nuclear localization." evidence="7">
    <original>K</original>
    <variation>R</variation>
    <location>
        <position position="290"/>
    </location>
</feature>
<feature type="sequence conflict" description="In Ref. 5; CAA42620." evidence="25" ref="5">
    <original>E</original>
    <variation>D</variation>
    <location>
        <position position="4"/>
    </location>
</feature>
<feature type="sequence conflict" description="In Ref. 5; CAA42620." evidence="25" ref="5">
    <original>E</original>
    <variation>D</variation>
    <location>
        <position position="8"/>
    </location>
</feature>
<feature type="sequence conflict" description="In Ref. 5; CAA42620." evidence="25" ref="5">
    <original>T</original>
    <variation>A</variation>
    <location>
        <position position="146"/>
    </location>
</feature>
<feature type="sequence conflict" description="In Ref. 5; CAA42620." evidence="25" ref="5">
    <original>T</original>
    <variation>A</variation>
    <location>
        <position position="153"/>
    </location>
</feature>
<feature type="sequence conflict" description="In Ref. 5; CAA42620." evidence="25" ref="5">
    <original>T</original>
    <variation>A</variation>
    <location>
        <position position="155"/>
    </location>
</feature>
<feature type="sequence conflict" description="In Ref. 5; CAA42620." evidence="25" ref="5">
    <original>Q</original>
    <variation>R</variation>
    <location>
        <position position="162"/>
    </location>
</feature>
<feature type="sequence conflict" description="In Ref. 5; CAA42620." evidence="25" ref="5">
    <original>A</original>
    <variation>T</variation>
    <location>
        <position position="170"/>
    </location>
</feature>
<feature type="sequence conflict" description="In Ref. 5; CAA42620." evidence="25" ref="5">
    <original>G</original>
    <variation>R</variation>
    <location>
        <position position="174"/>
    </location>
</feature>
<feature type="sequence conflict" description="In Ref. 5; CAA42620." evidence="25" ref="5">
    <original>N</original>
    <variation>S</variation>
    <location>
        <position position="181"/>
    </location>
</feature>
<feature type="sequence conflict" description="In Ref. 5; CAA42620." evidence="25" ref="5">
    <original>T</original>
    <variation>A</variation>
    <location>
        <position position="196"/>
    </location>
</feature>
<feature type="sequence conflict" description="In Ref. 6; AAQ24858." evidence="25" ref="6">
    <original>K</original>
    <variation>E</variation>
    <location>
        <position position="278"/>
    </location>
</feature>
<feature type="helix" evidence="29">
    <location>
        <begin position="106"/>
        <end position="114"/>
    </location>
</feature>
<feature type="helix" evidence="31">
    <location>
        <begin position="118"/>
        <end position="130"/>
    </location>
</feature>
<feature type="helix" evidence="30">
    <location>
        <begin position="272"/>
        <end position="322"/>
    </location>
</feature>
<proteinExistence type="evidence at protein level"/>
<accession>P16220</accession>
<accession>P21934</accession>
<accession>Q6V963</accession>
<accession>Q9UMA7</accession>
<keyword id="KW-0002">3D-structure</keyword>
<keyword id="KW-0010">Activator</keyword>
<keyword id="KW-0025">Alternative splicing</keyword>
<keyword id="KW-0090">Biological rhythms</keyword>
<keyword id="KW-0160">Chromosomal rearrangement</keyword>
<keyword id="KW-0221">Differentiation</keyword>
<keyword id="KW-0238">DNA-binding</keyword>
<keyword id="KW-0945">Host-virus interaction</keyword>
<keyword id="KW-1017">Isopeptide bond</keyword>
<keyword id="KW-0539">Nucleus</keyword>
<keyword id="KW-0597">Phosphoprotein</keyword>
<keyword id="KW-1267">Proteomics identification</keyword>
<keyword id="KW-1185">Reference proteome</keyword>
<keyword id="KW-0804">Transcription</keyword>
<keyword id="KW-0805">Transcription regulation</keyword>
<keyword id="KW-0832">Ubl conjugation</keyword>
<comment type="function">
    <text evidence="2 3 10">Phosphorylation-dependent transcription factor that stimulates transcription upon binding to the DNA cAMP response element (CRE), a sequence present in many viral and cellular promoters (By similarity). Transcription activation is enhanced by the TORC coactivators which act independently of Ser-119 phosphorylation (PubMed:14536081). Involved in different cellular processes including the synchronization of circadian rhythmicity and the differentiation of adipose cells (By similarity). Regulates the expression of apoptotic and inflammatory response factors in cardiomyocytes in response to ERFE-mediated activation of AKT signaling (By similarity).</text>
</comment>
<comment type="subunit">
    <text evidence="3 9 10 11 12 13 14 15 17 18 20">Interacts with PPRC1. Binds DNA as a dimer. This dimer is stabilized by magnesium ions. Interacts, through the bZIP domain, with the coactivators CRTC1/TORC1, CRTC2/TORC2 and CRTC3/TORC3. When phosphorylated on Ser-119, binds CREBBP (By similarity). Interacts with CREBL2; regulates CREB1 phosphorylation, stability and transcriptional activity (By similarity). Interacts (phosphorylated form) with TOX3. Interacts with ARRB1. Binds to HIPK2. Interacts with SGK1. Interacts with TSSK4; this interaction facilitates phosphorylation on Ser-119 (PubMed:15964553). Forms a complex with KMT2A and CREBBP (By similarity) (PubMed:14506290, PubMed:14536081, PubMed:15454081, PubMed:15733869, PubMed:15964553, PubMed:16325578, PubMed:16908542, PubMed:20573984, PubMed:21172805, PubMed:23651431). Interacts with TOX4; CREB1 is required for full induction of TOX4-dependent activity and the interaction is increased by cAMP and inhibited by insulin (By similarity).</text>
</comment>
<comment type="subunit">
    <text evidence="16">(Microbial infection) Interacts with hepatitis B virus/HBV protein X.</text>
</comment>
<comment type="subunit">
    <text evidence="8">(Microbial infection) Interacts with HTLV-1 protein Tax.</text>
</comment>
<comment type="interaction">
    <interactant intactId="EBI-711855">
        <id>P16220</id>
    </interactant>
    <interactant intactId="EBI-712648">
        <id>O95994</id>
        <label>AGR2</label>
    </interactant>
    <organismsDiffer>false</organismsDiffer>
    <experiments>3</experiments>
</comment>
<comment type="interaction">
    <interactant intactId="EBI-711855">
        <id>P16220</id>
    </interactant>
    <interactant intactId="EBI-852794">
        <id>P18846</id>
        <label>ATF1</label>
    </interactant>
    <organismsDiffer>false</organismsDiffer>
    <experiments>6</experiments>
</comment>
<comment type="interaction">
    <interactant intactId="EBI-711855">
        <id>P16220</id>
    </interactant>
    <interactant intactId="EBI-711855">
        <id>P16220</id>
        <label>CREB1</label>
    </interactant>
    <organismsDiffer>false</organismsDiffer>
    <experiments>4</experiments>
</comment>
<comment type="interaction">
    <interactant intactId="EBI-711855">
        <id>P16220</id>
    </interactant>
    <interactant intactId="EBI-81215">
        <id>Q92793</id>
        <label>CREBBP</label>
    </interactant>
    <organismsDiffer>false</organismsDiffer>
    <experiments>2</experiments>
</comment>
<comment type="interaction">
    <interactant intactId="EBI-711855">
        <id>P16220</id>
    </interactant>
    <interactant intactId="EBI-1644259">
        <id>Q6UUV9</id>
        <label>CRTC1</label>
    </interactant>
    <organismsDiffer>false</organismsDiffer>
    <experiments>6</experiments>
</comment>
<comment type="interaction">
    <interactant intactId="EBI-711855">
        <id>P16220</id>
    </interactant>
    <interactant intactId="EBI-1181987">
        <id>Q53ET0</id>
        <label>CRTC2</label>
    </interactant>
    <organismsDiffer>false</organismsDiffer>
    <experiments>3</experiments>
</comment>
<comment type="interaction">
    <interactant intactId="EBI-711855">
        <id>P16220</id>
    </interactant>
    <interactant intactId="EBI-466029">
        <id>P42858</id>
        <label>HTT</label>
    </interactant>
    <organismsDiffer>false</organismsDiffer>
    <experiments>3</experiments>
</comment>
<comment type="interaction">
    <interactant intactId="EBI-711855">
        <id>P16220</id>
    </interactant>
    <interactant intactId="EBI-1210694">
        <id>O00470</id>
        <label>MEIS1</label>
    </interactant>
    <organismsDiffer>false</organismsDiffer>
    <experiments>9</experiments>
</comment>
<comment type="interaction">
    <interactant intactId="EBI-711855">
        <id>P16220</id>
    </interactant>
    <interactant intactId="EBI-6907210">
        <id>O95644</id>
        <label>NFATC1</label>
    </interactant>
    <organismsDiffer>false</organismsDiffer>
    <experiments>3</experiments>
</comment>
<comment type="interaction">
    <interactant intactId="EBI-711855">
        <id>P16220</id>
    </interactant>
    <interactant intactId="EBI-716258">
        <id>Q13469</id>
        <label>NFATC2</label>
    </interactant>
    <organismsDiffer>false</organismsDiffer>
    <experiments>2</experiments>
</comment>
<comment type="interaction">
    <interactant intactId="EBI-711855">
        <id>P16220</id>
    </interactant>
    <interactant intactId="EBI-3951858">
        <id>Q16649</id>
        <label>NFIL3</label>
    </interactant>
    <organismsDiffer>false</organismsDiffer>
    <experiments>3</experiments>
</comment>
<comment type="interaction">
    <interactant intactId="EBI-711855">
        <id>P16220</id>
    </interactant>
    <interactant intactId="EBI-1042651">
        <id>Q96RG2</id>
        <label>PASK</label>
    </interactant>
    <organismsDiffer>false</organismsDiffer>
    <experiments>2</experiments>
</comment>
<comment type="interaction">
    <interactant intactId="EBI-711855">
        <id>P16220</id>
    </interactant>
    <interactant intactId="EBI-348567">
        <id>O75928-2</id>
        <label>PIAS2</label>
    </interactant>
    <organismsDiffer>false</organismsDiffer>
    <experiments>3</experiments>
</comment>
<comment type="interaction">
    <interactant intactId="EBI-711855">
        <id>P16220</id>
    </interactant>
    <interactant intactId="EBI-2340927">
        <id>P78317</id>
        <label>RNF4</label>
    </interactant>
    <organismsDiffer>false</organismsDiffer>
    <experiments>3</experiments>
</comment>
<comment type="interaction">
    <interactant intactId="EBI-711855">
        <id>P16220</id>
    </interactant>
    <interactant intactId="EBI-1202583">
        <id>Q6SA08</id>
        <label>TSSK4</label>
    </interactant>
    <organismsDiffer>false</organismsDiffer>
    <experiments>5</experiments>
</comment>
<comment type="interaction">
    <interactant intactId="EBI-711855">
        <id>P16220</id>
    </interactant>
    <interactant intactId="EBI-10890294">
        <id>P0C746</id>
        <label>HBZ</label>
    </interactant>
    <organismsDiffer>true</organismsDiffer>
    <experiments>2</experiments>
</comment>
<comment type="interaction">
    <interactant intactId="EBI-711855">
        <id>P16220</id>
    </interactant>
    <interactant intactId="EBI-10889526">
        <id>Q9DGW5</id>
        <label>MDV005</label>
    </interactant>
    <organismsDiffer>true</organismsDiffer>
    <experiments>2</experiments>
</comment>
<comment type="interaction">
    <interactant intactId="EBI-711855">
        <id>P16220</id>
    </interactant>
    <interactant intactId="EBI-7225021">
        <id>P03259-2</id>
    </interactant>
    <organismsDiffer>true</organismsDiffer>
    <experiments>2</experiments>
</comment>
<comment type="interaction">
    <interactant intactId="EBI-26386865">
        <id>P16220-1</id>
    </interactant>
    <interactant intactId="EBI-447295">
        <id>Q09472</id>
        <label>EP300</label>
    </interactant>
    <organismsDiffer>false</organismsDiffer>
    <experiments>2</experiments>
</comment>
<comment type="subcellular location">
    <subcellularLocation>
        <location evidence="4 5 7">Nucleus</location>
    </subcellularLocation>
</comment>
<comment type="alternative products">
    <event type="alternative splicing"/>
    <isoform>
        <id>P16220-2</id>
        <name>1</name>
        <name>CREB-B</name>
        <sequence type="displayed"/>
    </isoform>
    <isoform>
        <id>P16220-1</id>
        <name>2</name>
        <name>CREB-A</name>
        <sequence type="described" ref="VSP_060702"/>
    </isoform>
    <isoform>
        <id>P16220-3</id>
        <name>3</name>
        <name>htCREB</name>
        <sequence type="described" ref="VSP_060702 VSP_060703"/>
    </isoform>
</comment>
<comment type="PTM">
    <text evidence="1 12 13 17 21 22 23 24">Stimulated by phosphorylation. Phosphorylation of both Ser-119 and Ser-128 in the SCN regulates the activity of CREB and participates in circadian rhythm generation. Phosphorylation of Ser-119 allows CREBBP binding. In liver, phosphorylation is induced by fasting or glucagon in a circadian fashion (By similarity). CREBL2 positively regulates phosphorylation at Ser-119 thereby stimulating CREB1 transcriptional activity (By similarity). Phosphorylated upon calcium influx by CaMK4 and CaMK2 on Ser-119. CaMK4 is much more potent than CaMK2 in activating CREB. Phosphorylated by CaMK2 on Ser-128. Phosphorylation of Ser-128 blocks CREB-mediated transcription even when Ser-119 is phosphorylated. Phosphorylated by CaMK1 (By similarity). Phosphorylation of Ser-257 by HIPK2 in response to genotoxic stress promotes CREB1 activity, facilitating the recruitment of the coactivator CBP. Phosphorylated at Ser-119 by RPS6KA3, RPS6KA4 and RPS6KA5 in response to mitogenic or stress stimuli. Phosphorylated by TSSK4 on Ser-119 (PubMed:15964553).</text>
</comment>
<comment type="PTM">
    <text evidence="7">Sumoylated with SUMO1. Sumoylation on Lys-290, but not on Lys-271, is required for nuclear localization of this protein. Sumoylation is enhanced under hypoxia, promoting nuclear localization and stabilization.</text>
</comment>
<comment type="disease">
    <disease id="DI-02611">
        <name>Angiomatoid fibrous histiocytoma</name>
        <acronym>AFH</acronym>
        <description>A distinct variant of malignant fibrous histiocytoma that typically occurs in children and adolescents and is manifest by nodular subcutaneous growth. Characteristic microscopic features include lobulated sheets of histiocyte-like cells intimately associated with areas of hemorrhage and cystic pseudovascular spaces, as well as a striking cuffing of inflammatory cells, mimicking a lymph node metastasis.</description>
        <dbReference type="MIM" id="612160"/>
    </disease>
    <text>The gene represented in this entry may be involved in disease pathogenesis. A chromosomal aberration involving CREB1 is found in a patient with angiomatoid fibrous histiocytoma. Translocation t(2;22)(q33;q12) with CREB1 generates a EWSR1/CREB1 fusion gene that is most common genetic abnormality in this tumor type.</text>
</comment>
<comment type="disease">
    <text evidence="19">A CREB1 mutation has been found in a patient with multiple congenital anomalies consisting of agenesis of the corpus callosum, cerebellar hypoplasia, severe neonatal respiratory distress refractory to surfactant, thymus hypoplasia, and thyroid follicular hypoplasia.</text>
</comment>
<comment type="miscellaneous">
    <molecule>Isoform 3</molecule>
    <text evidence="25">Highly expressed in adult testis and sperm.</text>
</comment>
<comment type="similarity">
    <text evidence="25">Belongs to the bZIP family.</text>
</comment>
<name>CREB1_HUMAN</name>